<feature type="chain" id="PRO_0000185996" description="S-crystallin 1">
    <location>
        <begin position="1"/>
        <end position="214"/>
    </location>
</feature>
<feature type="domain" description="GST N-terminal">
    <location>
        <begin position="2"/>
        <end position="79"/>
    </location>
</feature>
<feature type="domain" description="GST C-terminal">
    <location>
        <begin position="81"/>
        <end position="214"/>
    </location>
</feature>
<keyword id="KW-0273">Eye lens protein</keyword>
<keyword id="KW-1185">Reference proteome</keyword>
<reference key="1">
    <citation type="journal article" date="1992" name="Biochem. Int.">
        <title>Facile cloning and sequencing of S-crystallin genes from octopus lenses based on polymerase chain reaction.</title>
        <authorList>
            <person name="Lin C.-W."/>
            <person name="Chiou S.-H."/>
        </authorList>
    </citation>
    <scope>NUCLEOTIDE SEQUENCE [MRNA]</scope>
    <source>
        <tissue>Lens</tissue>
    </source>
</reference>
<reference key="2">
    <citation type="journal article" date="1995" name="Biochem. J.">
        <title>Octopus S-crystallins with endogenous glutathione S-transferase (GST) activity: sequence comparison and evolutionary relationships with authentic GST enzymes.</title>
        <authorList>
            <person name="Chiou S.-H."/>
            <person name="Yu C.-W."/>
            <person name="Lin C.-W."/>
            <person name="Pan F.-M."/>
            <person name="Lu S.-F."/>
            <person name="Lee H.-J."/>
            <person name="Chang G.-G."/>
        </authorList>
    </citation>
    <scope>NUCLEOTIDE SEQUENCE [MRNA]</scope>
</reference>
<protein>
    <recommendedName>
        <fullName>S-crystallin 1</fullName>
    </recommendedName>
</protein>
<name>SCRY1_OCTVU</name>
<accession>P27013</accession>
<sequence length="214" mass="25280">MPSYTLHYFNHRGRARSAVCCSQLLVSSTMTADRVFRMGQHEKQDAMSHDANVGIGQQNPNSPEYAMARYLAREFGFHGRNNMEMARVDFISDCFYDILDDYMRMYQDGNCRMMFQRSRDMSSSSEKRMRFQETCRRILPFMERTLEMYNGGSQYFMGDQMTMADMMCYCALENPLMEEPSMLSSYPKLMALRNRVMNHSKMSSYLQRRCRTDF</sequence>
<dbReference type="EMBL" id="X65543">
    <property type="protein sequence ID" value="CAA46511.1"/>
    <property type="molecule type" value="mRNA"/>
</dbReference>
<dbReference type="PIR" id="S56758">
    <property type="entry name" value="S56758"/>
</dbReference>
<dbReference type="SMR" id="P27013"/>
<dbReference type="Proteomes" id="UP000515154">
    <property type="component" value="Unplaced"/>
</dbReference>
<dbReference type="GO" id="GO:0004364">
    <property type="term" value="F:glutathione transferase activity"/>
    <property type="evidence" value="ECO:0007669"/>
    <property type="project" value="TreeGrafter"/>
</dbReference>
<dbReference type="GO" id="GO:0005212">
    <property type="term" value="F:structural constituent of eye lens"/>
    <property type="evidence" value="ECO:0007669"/>
    <property type="project" value="UniProtKB-KW"/>
</dbReference>
<dbReference type="GO" id="GO:0006749">
    <property type="term" value="P:glutathione metabolic process"/>
    <property type="evidence" value="ECO:0007669"/>
    <property type="project" value="TreeGrafter"/>
</dbReference>
<dbReference type="CDD" id="cd03192">
    <property type="entry name" value="GST_C_Sigma_like"/>
    <property type="match status" value="1"/>
</dbReference>
<dbReference type="Gene3D" id="1.20.1050.10">
    <property type="match status" value="1"/>
</dbReference>
<dbReference type="InterPro" id="IPR010987">
    <property type="entry name" value="Glutathione-S-Trfase_C-like"/>
</dbReference>
<dbReference type="InterPro" id="IPR036282">
    <property type="entry name" value="Glutathione-S-Trfase_C_sf"/>
</dbReference>
<dbReference type="InterPro" id="IPR004046">
    <property type="entry name" value="GST_C"/>
</dbReference>
<dbReference type="InterPro" id="IPR050213">
    <property type="entry name" value="GST_superfamily"/>
</dbReference>
<dbReference type="InterPro" id="IPR003083">
    <property type="entry name" value="S-crystallin"/>
</dbReference>
<dbReference type="PANTHER" id="PTHR11571">
    <property type="entry name" value="GLUTATHIONE S-TRANSFERASE"/>
    <property type="match status" value="1"/>
</dbReference>
<dbReference type="PANTHER" id="PTHR11571:SF150">
    <property type="entry name" value="GLUTATHIONE S-TRANSFERASE"/>
    <property type="match status" value="1"/>
</dbReference>
<dbReference type="Pfam" id="PF14497">
    <property type="entry name" value="GST_C_3"/>
    <property type="match status" value="1"/>
</dbReference>
<dbReference type="PRINTS" id="PR01269">
    <property type="entry name" value="SCRYSTALLIN"/>
</dbReference>
<dbReference type="SUPFAM" id="SSF47616">
    <property type="entry name" value="GST C-terminal domain-like"/>
    <property type="match status" value="1"/>
</dbReference>
<dbReference type="PROSITE" id="PS50405">
    <property type="entry name" value="GST_CTER"/>
    <property type="match status" value="1"/>
</dbReference>
<dbReference type="PROSITE" id="PS50404">
    <property type="entry name" value="GST_NTER"/>
    <property type="match status" value="1"/>
</dbReference>
<proteinExistence type="evidence at transcript level"/>
<organism>
    <name type="scientific">Octopus vulgaris</name>
    <name type="common">Common octopus</name>
    <dbReference type="NCBI Taxonomy" id="6645"/>
    <lineage>
        <taxon>Eukaryota</taxon>
        <taxon>Metazoa</taxon>
        <taxon>Spiralia</taxon>
        <taxon>Lophotrochozoa</taxon>
        <taxon>Mollusca</taxon>
        <taxon>Cephalopoda</taxon>
        <taxon>Coleoidea</taxon>
        <taxon>Octopodiformes</taxon>
        <taxon>Octopoda</taxon>
        <taxon>Incirrata</taxon>
        <taxon>Octopodidae</taxon>
        <taxon>Octopus</taxon>
    </lineage>
</organism>
<comment type="function">
    <text>S-crystallins are structural components of squids and octopi eye lens. Contains relatively little GST activity (1/1000 of that of mammalian GST enzyme).</text>
</comment>
<comment type="tissue specificity">
    <text>Lens.</text>
</comment>
<comment type="similarity">
    <text evidence="1">Belongs to the GST superfamily.</text>
</comment>
<gene>
    <name type="primary">OCTS1</name>
</gene>
<evidence type="ECO:0000305" key="1"/>